<gene>
    <name evidence="18" type="primary">prdx-2</name>
    <name evidence="12" type="synonym">prx2</name>
    <name evidence="18" type="synonym">tag-56</name>
    <name evidence="18" type="ORF">F09E5.15</name>
</gene>
<feature type="chain" id="PRO_0000450862" description="Peroxiredoxin prdx-2">
    <location>
        <begin position="1"/>
        <end position="201"/>
    </location>
</feature>
<feature type="domain" description="Thioredoxin" evidence="2">
    <location>
        <begin position="10"/>
        <end position="168"/>
    </location>
</feature>
<feature type="active site" description="Cysteine sulfenic acid (-SOH) intermediate" evidence="1">
    <location>
        <position position="55"/>
    </location>
</feature>
<feature type="disulfide bond" description="Interchain (with C-176); in linked form" evidence="1">
    <location>
        <position position="55"/>
    </location>
</feature>
<feature type="disulfide bond" description="Interchain (with C-55); in linked form" evidence="1">
    <location>
        <position position="176"/>
    </location>
</feature>
<feature type="splice variant" id="VSP_060734" description="In isoform a." evidence="14">
    <location>
        <begin position="1"/>
        <end position="6"/>
    </location>
</feature>
<feature type="splice variant" id="VSP_060735" description="In isoform b." evidence="14">
    <original>MSLAPK</original>
    <variation>MYRQ</variation>
    <location>
        <begin position="1"/>
        <end position="6"/>
    </location>
</feature>
<organism evidence="15">
    <name type="scientific">Caenorhabditis elegans</name>
    <dbReference type="NCBI Taxonomy" id="6239"/>
    <lineage>
        <taxon>Eukaryota</taxon>
        <taxon>Metazoa</taxon>
        <taxon>Ecdysozoa</taxon>
        <taxon>Nematoda</taxon>
        <taxon>Chromadorea</taxon>
        <taxon>Rhabditida</taxon>
        <taxon>Rhabditina</taxon>
        <taxon>Rhabditomorpha</taxon>
        <taxon>Rhabditoidea</taxon>
        <taxon>Rhabditidae</taxon>
        <taxon>Peloderinae</taxon>
        <taxon>Caenorhabditis</taxon>
    </lineage>
</organism>
<name>PRDX_CAEEL</name>
<protein>
    <recommendedName>
        <fullName evidence="14">Peroxiredoxin prdx-2</fullName>
        <ecNumber evidence="3">1.11.1.24</ecNumber>
    </recommendedName>
    <alternativeName>
        <fullName evidence="13">2-Cys peroxiredoxin 2</fullName>
    </alternativeName>
</protein>
<sequence>MSLAPKMSKAFIGKPAPQFKTQAVVDGEFVDVSLSDYKGKYVVLFFYPLDFTFVCPTEIIAFSDRAEEFKAINTVVLAASTDSVFSHLAWINQPRKHGGLGEMNIPVLADTNHQISRDYGVLKEDEGIAFRGLFIIDPSQNLRQITINDLPVGRSVDETLRLVQAFQFVEKHGEVCPAGWTPGSDTIKPGVKESQEYFKKH</sequence>
<proteinExistence type="evidence at protein level"/>
<reference evidence="15" key="1">
    <citation type="journal article" date="1998" name="Science">
        <title>Genome sequence of the nematode C. elegans: a platform for investigating biology.</title>
        <authorList>
            <consortium name="The C. elegans sequencing consortium"/>
        </authorList>
    </citation>
    <scope>NUCLEOTIDE SEQUENCE [LARGE SCALE GENOMIC DNA]</scope>
    <source>
        <strain evidence="15">Bristol N2</strain>
    </source>
</reference>
<reference evidence="14" key="2">
    <citation type="journal article" date="2004" name="J. Mol. Biol.">
        <title>A peroxiredoxin specifically expressed in two types of pharyngeal neurons is required for normal growth and egg production in Caenorhabditis elegans.</title>
        <authorList>
            <person name="Isermann K."/>
            <person name="Liebau E."/>
            <person name="Roeder T."/>
            <person name="Bruchhaus I."/>
        </authorList>
    </citation>
    <scope>FUNCTION</scope>
    <scope>CATALYTIC ACTIVITY</scope>
    <scope>ACTIVITY REGULATION</scope>
    <scope>TISSUE SPECIFICITY</scope>
    <scope>DEVELOPMENTAL STAGE</scope>
    <scope>DISRUPTION PHENOTYPE</scope>
</reference>
<reference evidence="14" key="3">
    <citation type="journal article" date="2008" name="Proc. Natl. Acad. Sci. U.S.A.">
        <title>A redox-sensitive peroxiredoxin that is important for longevity has tissue- and stress-specific roles in stress resistance.</title>
        <authorList>
            <person name="Olahova M."/>
            <person name="Taylor S.R."/>
            <person name="Khazaipoul S."/>
            <person name="Wang J."/>
            <person name="Morgan B.A."/>
            <person name="Matsumoto K."/>
            <person name="Blackwell T.K."/>
            <person name="Veal E.A."/>
        </authorList>
    </citation>
    <scope>FUNCTION</scope>
    <scope>ACTIVITY REGULATION</scope>
    <scope>SUBUNIT</scope>
    <scope>SUBCELLULAR LOCATION</scope>
    <scope>TISSUE SPECIFICITY</scope>
    <scope>DEVELOPMENTAL STAGE</scope>
    <scope>DISRUPTION PHENOTYPE</scope>
</reference>
<reference evidence="14" key="4">
    <citation type="journal article" date="2011" name="Antioxid. Redox Signal.">
        <title>Is overoxidation of peroxiredoxin physiologically significant?</title>
        <authorList>
            <person name="Thamsen M."/>
            <person name="Kumsta C."/>
            <person name="Li F."/>
            <person name="Jakob U."/>
        </authorList>
    </citation>
    <scope>FUNCTION</scope>
</reference>
<reference evidence="14" key="5">
    <citation type="journal article" date="2011" name="Antioxid. Redox Signal.">
        <title>Effects of oxidative stress on behavior, physiology, and the redox thiol proteome of Caenorhabditis elegans.</title>
        <authorList>
            <person name="Kumsta C."/>
            <person name="Thamsen M."/>
            <person name="Jakob U."/>
        </authorList>
    </citation>
    <scope>FUNCTION</scope>
</reference>
<reference evidence="14" key="6">
    <citation type="journal article" date="2014" name="BMC Biol.">
        <title>Genome-wide screening identifies new genes required for stress-induced phase 2 detoxification gene expression in animals.</title>
        <authorList>
            <person name="Crook-McMahon H.M."/>
            <person name="Olahova M."/>
            <person name="Button E.L."/>
            <person name="Winter J.J."/>
            <person name="Veal E.A."/>
        </authorList>
    </citation>
    <scope>FUNCTION</scope>
</reference>
<reference evidence="14" key="7">
    <citation type="journal article" date="2014" name="Proc. Natl. Acad. Sci. U.S.A.">
        <title>Metformin promotes lifespan through mitohormesis via the peroxiredoxin PRDX-2.</title>
        <authorList>
            <person name="De Haes W."/>
            <person name="Frooninckx L."/>
            <person name="Van Assche R."/>
            <person name="Smolders A."/>
            <person name="Depuydt G."/>
            <person name="Billen J."/>
            <person name="Braeckman B.P."/>
            <person name="Schoofs L."/>
            <person name="Temmerman L."/>
        </authorList>
    </citation>
    <scope>FUNCTION</scope>
</reference>
<reference evidence="14" key="8">
    <citation type="journal article" date="2015" name="Aging Cell">
        <title>A peroxiredoxin, PRDX-2, is required for insulin secretion and insulin/IIS-dependent regulation of stress resistance and longevity.</title>
        <authorList>
            <person name="Olahova M."/>
            <person name="Veal E.A."/>
        </authorList>
    </citation>
    <scope>FUNCTION</scope>
    <scope>DISRUPTION PHENOTYPE</scope>
</reference>
<reference evidence="14" key="9">
    <citation type="journal article" date="2015" name="Neuron">
        <title>Light and hydrogen peroxide inhibit C. elegans Feeding through gustatory receptor orthologs and pharyngeal neurons.</title>
        <authorList>
            <person name="Bhatla N."/>
            <person name="Horvitz H.R."/>
        </authorList>
    </citation>
    <scope>FUNCTION</scope>
    <scope>TISSUE SPECIFICITY</scope>
</reference>
<reference evidence="14" key="10">
    <citation type="journal article" date="2018" name="Redox Biol.">
        <title>Do developmental temperatures affect redox level and lifespan in C. elegans through upregulation of peroxiredoxin?</title>
        <authorList>
            <person name="Henderson D."/>
            <person name="Huebner C."/>
            <person name="Markowitz M."/>
            <person name="Taube N."/>
            <person name="Harvanek Z.M."/>
            <person name="Jakob U."/>
            <person name="Knoefler D."/>
        </authorList>
    </citation>
    <scope>DEVELOPMENTAL STAGE</scope>
</reference>
<dbReference type="EC" id="1.11.1.24" evidence="3"/>
<dbReference type="EMBL" id="BX284602">
    <property type="protein sequence ID" value="CCD68767.1"/>
    <property type="molecule type" value="Genomic_DNA"/>
</dbReference>
<dbReference type="EMBL" id="BX284602">
    <property type="protein sequence ID" value="CCD68770.1"/>
    <property type="molecule type" value="Genomic_DNA"/>
</dbReference>
<dbReference type="EMBL" id="BX284602">
    <property type="protein sequence ID" value="CTQ86475.1"/>
    <property type="molecule type" value="Genomic_DNA"/>
</dbReference>
<dbReference type="RefSeq" id="NP_001122604.1">
    <property type="nucleotide sequence ID" value="NM_001129132.2"/>
</dbReference>
<dbReference type="RefSeq" id="NP_001300536.1">
    <molecule id="A0A0K3AUJ9-1"/>
    <property type="nucleotide sequence ID" value="NM_001313607.3"/>
</dbReference>
<dbReference type="RefSeq" id="NP_001367731.1">
    <molecule id="A0A0K3AUJ9-3"/>
    <property type="nucleotide sequence ID" value="NM_001381416.1"/>
</dbReference>
<dbReference type="RefSeq" id="NP_001370635.1">
    <molecule id="A0A0K3AUJ9-2"/>
    <property type="nucleotide sequence ID" value="NM_001383831.2"/>
</dbReference>
<dbReference type="RefSeq" id="NP_872052.1">
    <property type="nucleotide sequence ID" value="NM_182252.5"/>
</dbReference>
<dbReference type="SMR" id="A0A0K3AUJ9"/>
<dbReference type="FunCoup" id="A0A0K3AUJ9">
    <property type="interactions" value="1344"/>
</dbReference>
<dbReference type="STRING" id="6239.F09E5.15c.1"/>
<dbReference type="PeroxiBase" id="4485">
    <property type="entry name" value="Cel2CysPrx02"/>
</dbReference>
<dbReference type="PaxDb" id="6239-F09E5.15b"/>
<dbReference type="EnsemblMetazoa" id="F09E5.15a.1">
    <molecule id="A0A0K3AUJ9-2"/>
    <property type="protein sequence ID" value="F09E5.15a.1"/>
    <property type="gene ID" value="WBGene00006434"/>
</dbReference>
<dbReference type="EnsemblMetazoa" id="F09E5.15b.1">
    <molecule id="A0A0K3AUJ9-3"/>
    <property type="protein sequence ID" value="F09E5.15b.1"/>
    <property type="gene ID" value="WBGene00006434"/>
</dbReference>
<dbReference type="EnsemblMetazoa" id="F09E5.15c.1">
    <molecule id="A0A0K3AUJ9-1"/>
    <property type="protein sequence ID" value="F09E5.15c.1"/>
    <property type="gene ID" value="WBGene00006434"/>
</dbReference>
<dbReference type="GeneID" id="266858"/>
<dbReference type="KEGG" id="cel:CELE_F09E5.15"/>
<dbReference type="UCSC" id="F09E5.15b.1">
    <property type="organism name" value="c. elegans"/>
</dbReference>
<dbReference type="AGR" id="WB:WBGene00006434"/>
<dbReference type="CTD" id="266858"/>
<dbReference type="WormBase" id="F09E5.15a">
    <molecule id="A0A0K3AUJ9-2"/>
    <property type="protein sequence ID" value="CE32361"/>
    <property type="gene ID" value="WBGene00006434"/>
    <property type="gene designation" value="prdx-2"/>
</dbReference>
<dbReference type="WormBase" id="F09E5.15b">
    <molecule id="A0A0K3AUJ9-3"/>
    <property type="protein sequence ID" value="CE41559"/>
    <property type="gene ID" value="WBGene00006434"/>
    <property type="gene designation" value="prdx-2"/>
</dbReference>
<dbReference type="WormBase" id="F09E5.15c">
    <molecule id="A0A0K3AUJ9-1"/>
    <property type="protein sequence ID" value="CE50863"/>
    <property type="gene ID" value="WBGene00006434"/>
    <property type="gene designation" value="prdx-2"/>
</dbReference>
<dbReference type="eggNOG" id="KOG0852">
    <property type="taxonomic scope" value="Eukaryota"/>
</dbReference>
<dbReference type="HOGENOM" id="CLU_042529_21_1_1"/>
<dbReference type="InParanoid" id="A0A0K3AUJ9"/>
<dbReference type="OMA" id="HYAFGDV"/>
<dbReference type="OrthoDB" id="185659at2759"/>
<dbReference type="BRENDA" id="1.11.1.24">
    <property type="organism ID" value="1045"/>
</dbReference>
<dbReference type="Reactome" id="R-CEL-3299685">
    <property type="pathway name" value="Detoxification of Reactive Oxygen Species"/>
</dbReference>
<dbReference type="Reactome" id="R-CEL-5628897">
    <property type="pathway name" value="TP53 Regulates Metabolic Genes"/>
</dbReference>
<dbReference type="Reactome" id="R-CEL-9818027">
    <property type="pathway name" value="NFE2L2 regulating anti-oxidant/detoxification enzymes"/>
</dbReference>
<dbReference type="PRO" id="PR:A0A0K3AUJ9"/>
<dbReference type="Proteomes" id="UP000001940">
    <property type="component" value="Chromosome II"/>
</dbReference>
<dbReference type="Bgee" id="WBGene00006434">
    <property type="expression patterns" value="Expressed in embryo and 4 other cell types or tissues"/>
</dbReference>
<dbReference type="ExpressionAtlas" id="A0A0K3AUJ9">
    <property type="expression patterns" value="baseline and differential"/>
</dbReference>
<dbReference type="GO" id="GO:0005737">
    <property type="term" value="C:cytoplasm"/>
    <property type="evidence" value="ECO:0000314"/>
    <property type="project" value="WormBase"/>
</dbReference>
<dbReference type="GO" id="GO:0005829">
    <property type="term" value="C:cytosol"/>
    <property type="evidence" value="ECO:0000318"/>
    <property type="project" value="GO_Central"/>
</dbReference>
<dbReference type="GO" id="GO:0008379">
    <property type="term" value="F:thioredoxin peroxidase activity"/>
    <property type="evidence" value="ECO:0000314"/>
    <property type="project" value="WormBase"/>
</dbReference>
<dbReference type="GO" id="GO:0045454">
    <property type="term" value="P:cell redox homeostasis"/>
    <property type="evidence" value="ECO:0000318"/>
    <property type="project" value="GO_Central"/>
</dbReference>
<dbReference type="GO" id="GO:0070301">
    <property type="term" value="P:cellular response to hydrogen peroxide"/>
    <property type="evidence" value="ECO:0000315"/>
    <property type="project" value="UniProtKB"/>
</dbReference>
<dbReference type="GO" id="GO:0008340">
    <property type="term" value="P:determination of adult lifespan"/>
    <property type="evidence" value="ECO:0000315"/>
    <property type="project" value="UniProtKB"/>
</dbReference>
<dbReference type="GO" id="GO:0010286">
    <property type="term" value="P:heat acclimation"/>
    <property type="evidence" value="ECO:0000315"/>
    <property type="project" value="WormBase"/>
</dbReference>
<dbReference type="GO" id="GO:0042744">
    <property type="term" value="P:hydrogen peroxide catabolic process"/>
    <property type="evidence" value="ECO:0000314"/>
    <property type="project" value="WormBase"/>
</dbReference>
<dbReference type="GO" id="GO:0000122">
    <property type="term" value="P:negative regulation of transcription by RNA polymerase II"/>
    <property type="evidence" value="ECO:0000315"/>
    <property type="project" value="WormBase"/>
</dbReference>
<dbReference type="GO" id="GO:0090727">
    <property type="term" value="P:positive regulation of brood size"/>
    <property type="evidence" value="ECO:0000315"/>
    <property type="project" value="UniProtKB"/>
</dbReference>
<dbReference type="GO" id="GO:1902882">
    <property type="term" value="P:regulation of response to oxidative stress"/>
    <property type="evidence" value="ECO:0000315"/>
    <property type="project" value="UniProtKB"/>
</dbReference>
<dbReference type="GO" id="GO:0019430">
    <property type="term" value="P:removal of superoxide radicals"/>
    <property type="evidence" value="ECO:0000318"/>
    <property type="project" value="GO_Central"/>
</dbReference>
<dbReference type="GO" id="GO:0042542">
    <property type="term" value="P:response to hydrogen peroxide"/>
    <property type="evidence" value="ECO:0000315"/>
    <property type="project" value="WormBase"/>
</dbReference>
<dbReference type="GO" id="GO:0010038">
    <property type="term" value="P:response to metal ion"/>
    <property type="evidence" value="ECO:0000315"/>
    <property type="project" value="WormBase"/>
</dbReference>
<dbReference type="GO" id="GO:0006979">
    <property type="term" value="P:response to oxidative stress"/>
    <property type="evidence" value="ECO:0000318"/>
    <property type="project" value="GO_Central"/>
</dbReference>
<dbReference type="CDD" id="cd03015">
    <property type="entry name" value="PRX_Typ2cys"/>
    <property type="match status" value="1"/>
</dbReference>
<dbReference type="FunFam" id="3.40.30.10:FF:000003">
    <property type="entry name" value="Peroxiredoxin 1"/>
    <property type="match status" value="1"/>
</dbReference>
<dbReference type="Gene3D" id="3.40.30.10">
    <property type="entry name" value="Glutaredoxin"/>
    <property type="match status" value="1"/>
</dbReference>
<dbReference type="InterPro" id="IPR000866">
    <property type="entry name" value="AhpC/TSA"/>
</dbReference>
<dbReference type="InterPro" id="IPR050217">
    <property type="entry name" value="Peroxiredoxin"/>
</dbReference>
<dbReference type="InterPro" id="IPR024706">
    <property type="entry name" value="Peroxiredoxin_AhpC-typ"/>
</dbReference>
<dbReference type="InterPro" id="IPR019479">
    <property type="entry name" value="Peroxiredoxin_C"/>
</dbReference>
<dbReference type="InterPro" id="IPR036249">
    <property type="entry name" value="Thioredoxin-like_sf"/>
</dbReference>
<dbReference type="InterPro" id="IPR013766">
    <property type="entry name" value="Thioredoxin_domain"/>
</dbReference>
<dbReference type="PANTHER" id="PTHR10681:SF163">
    <property type="entry name" value="AT16346P-RELATED"/>
    <property type="match status" value="1"/>
</dbReference>
<dbReference type="PANTHER" id="PTHR10681">
    <property type="entry name" value="THIOREDOXIN PEROXIDASE"/>
    <property type="match status" value="1"/>
</dbReference>
<dbReference type="Pfam" id="PF10417">
    <property type="entry name" value="1-cysPrx_C"/>
    <property type="match status" value="1"/>
</dbReference>
<dbReference type="Pfam" id="PF00578">
    <property type="entry name" value="AhpC-TSA"/>
    <property type="match status" value="1"/>
</dbReference>
<dbReference type="PIRSF" id="PIRSF000239">
    <property type="entry name" value="AHPC"/>
    <property type="match status" value="1"/>
</dbReference>
<dbReference type="SUPFAM" id="SSF52833">
    <property type="entry name" value="Thioredoxin-like"/>
    <property type="match status" value="1"/>
</dbReference>
<dbReference type="PROSITE" id="PS51352">
    <property type="entry name" value="THIOREDOXIN_2"/>
    <property type="match status" value="1"/>
</dbReference>
<comment type="function">
    <text evidence="3 4 5 6 7 8 9 10">Thiol-specific peroxidase that catalyzes the reduction of hydrogen peroxide and organic hydroperoxides to water and alcohols, respectively (PubMed:15099742). In I2 pharyngeal neurons, required for the inhibition of feeding in response to light and hydrogen peroxide (PubMed:25640076). In the intestine, plays a role in protecting cells against oxidative stress by detoxifying peroxides such as hydrogen peroxide (PubMed:15099742, PubMed:19064914, PubMed:20649472). In addition, plays a role in the recovery from oxidative stress induced by hydrogen peroxide (PubMed:20649472). In its hyperoxidized form (induced by hydrogen peroxide), confers protection against heat stress (PubMed:19064914). However, has a low tendency for overoxidation during the normal lifespan (PubMed:20964547). Increases sensitivity to cytotoxicity caused by metalloids and heavy metals such as arsenic and cadmium by playing a role in inhibiting the expression of phase II detoxification genes such as gcs-1 in intestinal cells (PubMed:19064914, PubMed:25204677). In addition, in response to arsenite, promotes the secretion of the insulin ligand daf-28 into the pseudocoelom, which negatively regulates the activities of daf-16 and skn-1 (PubMed:25808059). Plays a role in promoting longevity (PubMed:19064914, PubMed:24889636). Plays a role in the mitohormetic pathway by promoting the activation of pmk-1 in response to the drug metformin (PubMed:24889636).</text>
</comment>
<comment type="catalytic activity">
    <reaction evidence="3">
        <text>a hydroperoxide + [thioredoxin]-dithiol = an alcohol + [thioredoxin]-disulfide + H2O</text>
        <dbReference type="Rhea" id="RHEA:62620"/>
        <dbReference type="Rhea" id="RHEA-COMP:10698"/>
        <dbReference type="Rhea" id="RHEA-COMP:10700"/>
        <dbReference type="ChEBI" id="CHEBI:15377"/>
        <dbReference type="ChEBI" id="CHEBI:29950"/>
        <dbReference type="ChEBI" id="CHEBI:30879"/>
        <dbReference type="ChEBI" id="CHEBI:35924"/>
        <dbReference type="ChEBI" id="CHEBI:50058"/>
        <dbReference type="EC" id="1.11.1.24"/>
    </reaction>
</comment>
<comment type="activity regulation">
    <text evidence="3 4">Activated following oxidation of the conserved redox-active cysteine residue, which subsequently allows for the oxidation and activation of substrates.</text>
</comment>
<comment type="subunit">
    <text evidence="4 7">Monomer and homodimer; disulfide-linked (PubMed:19064914). Under nonstress conditions, present in the reduced monomeric form (PubMed:19064914). Forms active hyperoxidized monomers and disulfide-linked homodimers upon oxidation by hydrogen peroxide (PubMed:19064914). Forms active oxidized homodimers in response to the drug metformin (PubMed:24889636).</text>
</comment>
<comment type="subcellular location">
    <subcellularLocation>
        <location evidence="4">Cytoplasm</location>
    </subcellularLocation>
</comment>
<comment type="alternative products">
    <event type="alternative splicing"/>
    <isoform>
        <id>A0A0K3AUJ9-1</id>
        <name evidence="18">c</name>
        <sequence type="displayed"/>
    </isoform>
    <isoform>
        <id>A0A0K3AUJ9-2</id>
        <name evidence="16">a</name>
        <sequence type="described" ref="VSP_060734"/>
    </isoform>
    <isoform>
        <id>A0A0K3AUJ9-3</id>
        <name evidence="17">b</name>
        <sequence type="described" ref="VSP_060735"/>
    </isoform>
</comment>
<comment type="tissue specificity">
    <text evidence="3 4 9">Expressed in the gonad, neurons and intestine (at protein level) (PubMed:19064914). Expressed in the pharyngeal inter-neuron I4 and the sensory interneuron I2 (PubMed:15099742, PubMed:25640076). Expressed in the intestine, pharyngeal muscle 1, vulval muscle, body wall muscle, epithelial cells e1 and e3, and neurons in the head and tail (PubMed:25640076).</text>
</comment>
<comment type="developmental stage">
    <text evidence="3 4 11">Expressed throughout embryonic, larval and adult stages (PubMed:15099742, PubMed:19064914). Highly expressed at the L3 larval stage at 25 degrees Celsius (PubMed:29055282).</text>
</comment>
<comment type="induction">
    <text evidence="7">Up-regulated in response to the drug metformin.</text>
</comment>
<comment type="PTM">
    <text evidence="1">The enzyme can be inactivated by further oxidation of the cysteine sulfenic acid (C(P)-SOH) to sulphinic acid (C(P)-SO2H) instead of its condensation to a disulfide bond.</text>
</comment>
<comment type="disruption phenotype">
    <text evidence="3 4 10">Reduced size, egg production and brood size (PubMed:15099742). Survival in response to heat and oxidative stress induced by peroxides is comparable to wild-type (PubMed:15099742). RNAi-mediated knockdown increases lifespan in response to the heavy metal arsenite (PubMed:25808059). RNAi-mediated knockdown increases expression of gcs-1 and further increases gcs-1 expression in response to the heavy metal arsenite (PubMed:19064914). RNAi-mediated knockdown increases the expression of isoform a of skn-1 in intestinal nuclei (PubMed:25808059).</text>
</comment>
<comment type="miscellaneous">
    <text evidence="1">The active site is a conserved redox-active cysteine residue, the peroxidatic cysteine (C(P)), which makes the nucleophilic attack on the peroxide substrate. The peroxide oxidizes the C(P)-SH to cysteine sulfenic acid (C(P)-SOH), which then reacts with another cysteine residue, the resolving cysteine (C(R)), to form a disulfide bridge. The disulfide is subsequently reduced by an appropriate electron donor to complete the catalytic cycle. In this typical 2-Cys peroxiredoxin, C(R) is provided by the other dimeric subunit to form an intersubunit disulfide. The disulfide is subsequently reduced by thioredoxin.</text>
</comment>
<comment type="similarity">
    <text evidence="14">Belongs to the peroxiredoxin family. AhpC/Prx1 subfamily.</text>
</comment>
<keyword id="KW-0025">Alternative splicing</keyword>
<keyword id="KW-0049">Antioxidant</keyword>
<keyword id="KW-0963">Cytoplasm</keyword>
<keyword id="KW-1015">Disulfide bond</keyword>
<keyword id="KW-0560">Oxidoreductase</keyword>
<keyword id="KW-0575">Peroxidase</keyword>
<keyword id="KW-0676">Redox-active center</keyword>
<keyword id="KW-1185">Reference proteome</keyword>
<accession>A0A0K3AUJ9</accession>
<accession>H2KZL7</accession>
<accession>Q8IG31</accession>
<evidence type="ECO:0000250" key="1">
    <source>
        <dbReference type="UniProtKB" id="Q06830"/>
    </source>
</evidence>
<evidence type="ECO:0000255" key="2">
    <source>
        <dbReference type="PROSITE-ProRule" id="PRU00691"/>
    </source>
</evidence>
<evidence type="ECO:0000269" key="3">
    <source>
    </source>
</evidence>
<evidence type="ECO:0000269" key="4">
    <source>
    </source>
</evidence>
<evidence type="ECO:0000269" key="5">
    <source>
    </source>
</evidence>
<evidence type="ECO:0000269" key="6">
    <source>
    </source>
</evidence>
<evidence type="ECO:0000269" key="7">
    <source>
    </source>
</evidence>
<evidence type="ECO:0000269" key="8">
    <source>
    </source>
</evidence>
<evidence type="ECO:0000269" key="9">
    <source>
    </source>
</evidence>
<evidence type="ECO:0000269" key="10">
    <source>
    </source>
</evidence>
<evidence type="ECO:0000269" key="11">
    <source>
    </source>
</evidence>
<evidence type="ECO:0000303" key="12">
    <source>
    </source>
</evidence>
<evidence type="ECO:0000303" key="13">
    <source>
    </source>
</evidence>
<evidence type="ECO:0000305" key="14"/>
<evidence type="ECO:0000312" key="15">
    <source>
        <dbReference type="Proteomes" id="UP000001940"/>
    </source>
</evidence>
<evidence type="ECO:0000312" key="16">
    <source>
        <dbReference type="WormBase" id="F09E5.15a"/>
    </source>
</evidence>
<evidence type="ECO:0000312" key="17">
    <source>
        <dbReference type="WormBase" id="F09E5.15b"/>
    </source>
</evidence>
<evidence type="ECO:0000312" key="18">
    <source>
        <dbReference type="WormBase" id="F09E5.15c"/>
    </source>
</evidence>